<comment type="function">
    <text evidence="1">Required for insertion of 4Fe-4S clusters for at least IspG.</text>
</comment>
<comment type="cofactor">
    <cofactor evidence="1">
        <name>iron-sulfur cluster</name>
        <dbReference type="ChEBI" id="CHEBI:30408"/>
    </cofactor>
    <text evidence="1">Binds 1 iron-sulfur cluster per subunit.</text>
</comment>
<comment type="subunit">
    <text evidence="1">Homodimer.</text>
</comment>
<comment type="similarity">
    <text evidence="1">Belongs to the HesB/IscA family.</text>
</comment>
<sequence>MNDIQIPIIFTDAAAKKVKSLIEGEDNPNLRLRVYITGGGCSGFQYGFTFDDQVNDGDLTIENQNVGLVVDPMSLQYLIGGTVDYTEGLDGSRFVVNNPNATSTCGCGSSFSI</sequence>
<organism>
    <name type="scientific">Actinobacillus pleuropneumoniae serotype 3 (strain JL03)</name>
    <dbReference type="NCBI Taxonomy" id="434271"/>
    <lineage>
        <taxon>Bacteria</taxon>
        <taxon>Pseudomonadati</taxon>
        <taxon>Pseudomonadota</taxon>
        <taxon>Gammaproteobacteria</taxon>
        <taxon>Pasteurellales</taxon>
        <taxon>Pasteurellaceae</taxon>
        <taxon>Actinobacillus</taxon>
    </lineage>
</organism>
<reference key="1">
    <citation type="journal article" date="2008" name="PLoS ONE">
        <title>Genome biology of Actinobacillus pleuropneumoniae JL03, an isolate of serotype 3 prevalent in China.</title>
        <authorList>
            <person name="Xu Z."/>
            <person name="Zhou Y."/>
            <person name="Li L."/>
            <person name="Zhou R."/>
            <person name="Xiao S."/>
            <person name="Wan Y."/>
            <person name="Zhang S."/>
            <person name="Wang K."/>
            <person name="Li W."/>
            <person name="Li L."/>
            <person name="Jin H."/>
            <person name="Kang M."/>
            <person name="Dalai B."/>
            <person name="Li T."/>
            <person name="Liu L."/>
            <person name="Cheng Y."/>
            <person name="Zhang L."/>
            <person name="Xu T."/>
            <person name="Zheng H."/>
            <person name="Pu S."/>
            <person name="Wang B."/>
            <person name="Gu W."/>
            <person name="Zhang X.L."/>
            <person name="Zhu G.-F."/>
            <person name="Wang S."/>
            <person name="Zhao G.-P."/>
            <person name="Chen H."/>
        </authorList>
    </citation>
    <scope>NUCLEOTIDE SEQUENCE [LARGE SCALE GENOMIC DNA]</scope>
    <source>
        <strain>JL03</strain>
    </source>
</reference>
<accession>B0BR51</accession>
<proteinExistence type="inferred from homology"/>
<feature type="chain" id="PRO_1000144893" description="Iron-sulfur cluster insertion protein ErpA">
    <location>
        <begin position="1"/>
        <end position="113"/>
    </location>
</feature>
<feature type="binding site" evidence="1">
    <location>
        <position position="41"/>
    </location>
    <ligand>
        <name>iron-sulfur cluster</name>
        <dbReference type="ChEBI" id="CHEBI:30408"/>
    </ligand>
</feature>
<feature type="binding site" evidence="1">
    <location>
        <position position="105"/>
    </location>
    <ligand>
        <name>iron-sulfur cluster</name>
        <dbReference type="ChEBI" id="CHEBI:30408"/>
    </ligand>
</feature>
<feature type="binding site" evidence="1">
    <location>
        <position position="107"/>
    </location>
    <ligand>
        <name>iron-sulfur cluster</name>
        <dbReference type="ChEBI" id="CHEBI:30408"/>
    </ligand>
</feature>
<keyword id="KW-0408">Iron</keyword>
<keyword id="KW-0411">Iron-sulfur</keyword>
<keyword id="KW-0479">Metal-binding</keyword>
<name>ERPA_ACTPJ</name>
<protein>
    <recommendedName>
        <fullName evidence="1">Iron-sulfur cluster insertion protein ErpA</fullName>
    </recommendedName>
</protein>
<dbReference type="EMBL" id="CP000687">
    <property type="protein sequence ID" value="ABY70036.1"/>
    <property type="molecule type" value="Genomic_DNA"/>
</dbReference>
<dbReference type="RefSeq" id="WP_005608711.1">
    <property type="nucleotide sequence ID" value="NC_010278.1"/>
</dbReference>
<dbReference type="SMR" id="B0BR51"/>
<dbReference type="KEGG" id="apj:APJL_1484"/>
<dbReference type="HOGENOM" id="CLU_069054_5_3_6"/>
<dbReference type="Proteomes" id="UP000008547">
    <property type="component" value="Chromosome"/>
</dbReference>
<dbReference type="GO" id="GO:0005829">
    <property type="term" value="C:cytosol"/>
    <property type="evidence" value="ECO:0007669"/>
    <property type="project" value="TreeGrafter"/>
</dbReference>
<dbReference type="GO" id="GO:0051537">
    <property type="term" value="F:2 iron, 2 sulfur cluster binding"/>
    <property type="evidence" value="ECO:0007669"/>
    <property type="project" value="TreeGrafter"/>
</dbReference>
<dbReference type="GO" id="GO:0051539">
    <property type="term" value="F:4 iron, 4 sulfur cluster binding"/>
    <property type="evidence" value="ECO:0007669"/>
    <property type="project" value="TreeGrafter"/>
</dbReference>
<dbReference type="GO" id="GO:0005506">
    <property type="term" value="F:iron ion binding"/>
    <property type="evidence" value="ECO:0007669"/>
    <property type="project" value="UniProtKB-UniRule"/>
</dbReference>
<dbReference type="GO" id="GO:0016226">
    <property type="term" value="P:iron-sulfur cluster assembly"/>
    <property type="evidence" value="ECO:0007669"/>
    <property type="project" value="UniProtKB-UniRule"/>
</dbReference>
<dbReference type="FunFam" id="2.60.300.12:FF:000002">
    <property type="entry name" value="Iron-sulfur cluster insertion protein ErpA"/>
    <property type="match status" value="1"/>
</dbReference>
<dbReference type="Gene3D" id="2.60.300.12">
    <property type="entry name" value="HesB-like domain"/>
    <property type="match status" value="1"/>
</dbReference>
<dbReference type="HAMAP" id="MF_01380">
    <property type="entry name" value="Fe_S_insert_ErpA"/>
    <property type="match status" value="1"/>
</dbReference>
<dbReference type="InterPro" id="IPR000361">
    <property type="entry name" value="FeS_biogenesis"/>
</dbReference>
<dbReference type="InterPro" id="IPR016092">
    <property type="entry name" value="FeS_cluster_insertion"/>
</dbReference>
<dbReference type="InterPro" id="IPR017870">
    <property type="entry name" value="FeS_cluster_insertion_CS"/>
</dbReference>
<dbReference type="InterPro" id="IPR023063">
    <property type="entry name" value="FeS_cluster_insertion_RrpA"/>
</dbReference>
<dbReference type="InterPro" id="IPR035903">
    <property type="entry name" value="HesB-like_dom_sf"/>
</dbReference>
<dbReference type="NCBIfam" id="TIGR00049">
    <property type="entry name" value="iron-sulfur cluster assembly accessory protein"/>
    <property type="match status" value="1"/>
</dbReference>
<dbReference type="NCBIfam" id="NF010147">
    <property type="entry name" value="PRK13623.1"/>
    <property type="match status" value="1"/>
</dbReference>
<dbReference type="PANTHER" id="PTHR43011">
    <property type="entry name" value="IRON-SULFUR CLUSTER ASSEMBLY 2 HOMOLOG, MITOCHONDRIAL"/>
    <property type="match status" value="1"/>
</dbReference>
<dbReference type="PANTHER" id="PTHR43011:SF1">
    <property type="entry name" value="IRON-SULFUR CLUSTER ASSEMBLY 2 HOMOLOG, MITOCHONDRIAL"/>
    <property type="match status" value="1"/>
</dbReference>
<dbReference type="Pfam" id="PF01521">
    <property type="entry name" value="Fe-S_biosyn"/>
    <property type="match status" value="1"/>
</dbReference>
<dbReference type="SUPFAM" id="SSF89360">
    <property type="entry name" value="HesB-like domain"/>
    <property type="match status" value="1"/>
</dbReference>
<dbReference type="PROSITE" id="PS01152">
    <property type="entry name" value="HESB"/>
    <property type="match status" value="1"/>
</dbReference>
<evidence type="ECO:0000255" key="1">
    <source>
        <dbReference type="HAMAP-Rule" id="MF_01380"/>
    </source>
</evidence>
<gene>
    <name evidence="1" type="primary">erpA</name>
    <name type="ordered locus">APJL_1484</name>
</gene>